<feature type="chain" id="PRO_0000111208" description="Small ribosomal subunit protein bS18">
    <location>
        <begin position="1"/>
        <end position="73"/>
    </location>
</feature>
<keyword id="KW-0687">Ribonucleoprotein</keyword>
<keyword id="KW-0689">Ribosomal protein</keyword>
<keyword id="KW-0694">RNA-binding</keyword>
<keyword id="KW-0699">rRNA-binding</keyword>
<sequence length="73" mass="8317">MPNSIFKKQLSPIKPGDPIDYKDVELLKKFITERGKILPRRMTGLTSKQQRDLTLAVKRARIVALLPFVNPEG</sequence>
<gene>
    <name evidence="1" type="primary">rpsR</name>
    <name evidence="1" type="synonym">rps18</name>
    <name type="ordered locus">PMM0869</name>
</gene>
<evidence type="ECO:0000255" key="1">
    <source>
        <dbReference type="HAMAP-Rule" id="MF_00270"/>
    </source>
</evidence>
<evidence type="ECO:0000305" key="2"/>
<protein>
    <recommendedName>
        <fullName evidence="1">Small ribosomal subunit protein bS18</fullName>
    </recommendedName>
    <alternativeName>
        <fullName evidence="2">30S ribosomal protein S18</fullName>
    </alternativeName>
</protein>
<accession>Q7TUA0</accession>
<name>RS18_PROMP</name>
<organism>
    <name type="scientific">Prochlorococcus marinus subsp. pastoris (strain CCMP1986 / NIES-2087 / MED4)</name>
    <dbReference type="NCBI Taxonomy" id="59919"/>
    <lineage>
        <taxon>Bacteria</taxon>
        <taxon>Bacillati</taxon>
        <taxon>Cyanobacteriota</taxon>
        <taxon>Cyanophyceae</taxon>
        <taxon>Synechococcales</taxon>
        <taxon>Prochlorococcaceae</taxon>
        <taxon>Prochlorococcus</taxon>
    </lineage>
</organism>
<comment type="function">
    <text evidence="1">Binds as a heterodimer with protein bS6 to the central domain of the 16S rRNA, where it helps stabilize the platform of the 30S subunit.</text>
</comment>
<comment type="subunit">
    <text evidence="1">Part of the 30S ribosomal subunit. Forms a tight heterodimer with protein bS6.</text>
</comment>
<comment type="similarity">
    <text evidence="1">Belongs to the bacterial ribosomal protein bS18 family.</text>
</comment>
<dbReference type="EMBL" id="BX548174">
    <property type="protein sequence ID" value="CAE19328.1"/>
    <property type="molecule type" value="Genomic_DNA"/>
</dbReference>
<dbReference type="RefSeq" id="WP_002806014.1">
    <property type="nucleotide sequence ID" value="NC_005072.1"/>
</dbReference>
<dbReference type="SMR" id="Q7TUA0"/>
<dbReference type="STRING" id="59919.PMM0869"/>
<dbReference type="GeneID" id="60201040"/>
<dbReference type="KEGG" id="pmm:PMM0869"/>
<dbReference type="eggNOG" id="COG0238">
    <property type="taxonomic scope" value="Bacteria"/>
</dbReference>
<dbReference type="HOGENOM" id="CLU_148710_2_3_3"/>
<dbReference type="OrthoDB" id="9812008at2"/>
<dbReference type="Proteomes" id="UP000001026">
    <property type="component" value="Chromosome"/>
</dbReference>
<dbReference type="GO" id="GO:0022627">
    <property type="term" value="C:cytosolic small ribosomal subunit"/>
    <property type="evidence" value="ECO:0007669"/>
    <property type="project" value="TreeGrafter"/>
</dbReference>
<dbReference type="GO" id="GO:0070181">
    <property type="term" value="F:small ribosomal subunit rRNA binding"/>
    <property type="evidence" value="ECO:0007669"/>
    <property type="project" value="TreeGrafter"/>
</dbReference>
<dbReference type="GO" id="GO:0003735">
    <property type="term" value="F:structural constituent of ribosome"/>
    <property type="evidence" value="ECO:0007669"/>
    <property type="project" value="InterPro"/>
</dbReference>
<dbReference type="GO" id="GO:0006412">
    <property type="term" value="P:translation"/>
    <property type="evidence" value="ECO:0007669"/>
    <property type="project" value="UniProtKB-UniRule"/>
</dbReference>
<dbReference type="FunFam" id="4.10.640.10:FF:000002">
    <property type="entry name" value="30S ribosomal protein S18, chloroplastic"/>
    <property type="match status" value="1"/>
</dbReference>
<dbReference type="Gene3D" id="4.10.640.10">
    <property type="entry name" value="Ribosomal protein S18"/>
    <property type="match status" value="1"/>
</dbReference>
<dbReference type="HAMAP" id="MF_00270">
    <property type="entry name" value="Ribosomal_bS18"/>
    <property type="match status" value="1"/>
</dbReference>
<dbReference type="InterPro" id="IPR001648">
    <property type="entry name" value="Ribosomal_bS18"/>
</dbReference>
<dbReference type="InterPro" id="IPR018275">
    <property type="entry name" value="Ribosomal_bS18_CS"/>
</dbReference>
<dbReference type="InterPro" id="IPR036870">
    <property type="entry name" value="Ribosomal_bS18_sf"/>
</dbReference>
<dbReference type="NCBIfam" id="TIGR00165">
    <property type="entry name" value="S18"/>
    <property type="match status" value="1"/>
</dbReference>
<dbReference type="PANTHER" id="PTHR13479">
    <property type="entry name" value="30S RIBOSOMAL PROTEIN S18"/>
    <property type="match status" value="1"/>
</dbReference>
<dbReference type="PANTHER" id="PTHR13479:SF40">
    <property type="entry name" value="SMALL RIBOSOMAL SUBUNIT PROTEIN BS18M"/>
    <property type="match status" value="1"/>
</dbReference>
<dbReference type="Pfam" id="PF01084">
    <property type="entry name" value="Ribosomal_S18"/>
    <property type="match status" value="1"/>
</dbReference>
<dbReference type="PRINTS" id="PR00974">
    <property type="entry name" value="RIBOSOMALS18"/>
</dbReference>
<dbReference type="SUPFAM" id="SSF46911">
    <property type="entry name" value="Ribosomal protein S18"/>
    <property type="match status" value="1"/>
</dbReference>
<dbReference type="PROSITE" id="PS00057">
    <property type="entry name" value="RIBOSOMAL_S18"/>
    <property type="match status" value="1"/>
</dbReference>
<proteinExistence type="inferred from homology"/>
<reference key="1">
    <citation type="journal article" date="2003" name="Nature">
        <title>Genome divergence in two Prochlorococcus ecotypes reflects oceanic niche differentiation.</title>
        <authorList>
            <person name="Rocap G."/>
            <person name="Larimer F.W."/>
            <person name="Lamerdin J.E."/>
            <person name="Malfatti S."/>
            <person name="Chain P."/>
            <person name="Ahlgren N.A."/>
            <person name="Arellano A."/>
            <person name="Coleman M."/>
            <person name="Hauser L."/>
            <person name="Hess W.R."/>
            <person name="Johnson Z.I."/>
            <person name="Land M.L."/>
            <person name="Lindell D."/>
            <person name="Post A.F."/>
            <person name="Regala W."/>
            <person name="Shah M."/>
            <person name="Shaw S.L."/>
            <person name="Steglich C."/>
            <person name="Sullivan M.B."/>
            <person name="Ting C.S."/>
            <person name="Tolonen A."/>
            <person name="Webb E.A."/>
            <person name="Zinser E.R."/>
            <person name="Chisholm S.W."/>
        </authorList>
    </citation>
    <scope>NUCLEOTIDE SEQUENCE [LARGE SCALE GENOMIC DNA]</scope>
    <source>
        <strain>CCMP1986 / NIES-2087 / MED4</strain>
    </source>
</reference>